<protein>
    <recommendedName>
        <fullName>Uncharacterized protein YjaG</fullName>
    </recommendedName>
</protein>
<dbReference type="EMBL" id="U00006">
    <property type="protein sequence ID" value="AAC43097.1"/>
    <property type="molecule type" value="Genomic_DNA"/>
</dbReference>
<dbReference type="EMBL" id="U00096">
    <property type="protein sequence ID" value="AAC76973.1"/>
    <property type="molecule type" value="Genomic_DNA"/>
</dbReference>
<dbReference type="EMBL" id="AP009048">
    <property type="protein sequence ID" value="BAE77320.1"/>
    <property type="molecule type" value="Genomic_DNA"/>
</dbReference>
<dbReference type="PIR" id="B65207">
    <property type="entry name" value="B65207"/>
</dbReference>
<dbReference type="RefSeq" id="NP_418427.1">
    <property type="nucleotide sequence ID" value="NC_000913.3"/>
</dbReference>
<dbReference type="RefSeq" id="WP_000940106.1">
    <property type="nucleotide sequence ID" value="NZ_STEB01000045.1"/>
</dbReference>
<dbReference type="SMR" id="P32680"/>
<dbReference type="BioGRID" id="4261237">
    <property type="interactions" value="9"/>
</dbReference>
<dbReference type="DIP" id="DIP-12528N"/>
<dbReference type="FunCoup" id="P32680">
    <property type="interactions" value="75"/>
</dbReference>
<dbReference type="IntAct" id="P32680">
    <property type="interactions" value="6"/>
</dbReference>
<dbReference type="STRING" id="511145.b3999"/>
<dbReference type="jPOST" id="P32680"/>
<dbReference type="PaxDb" id="511145-b3999"/>
<dbReference type="DNASU" id="948501"/>
<dbReference type="EnsemblBacteria" id="AAC76973">
    <property type="protein sequence ID" value="AAC76973"/>
    <property type="gene ID" value="b3999"/>
</dbReference>
<dbReference type="GeneID" id="948501"/>
<dbReference type="KEGG" id="ecj:JW3963"/>
<dbReference type="KEGG" id="eco:b3999"/>
<dbReference type="KEGG" id="ecoc:C3026_21600"/>
<dbReference type="PATRIC" id="fig|511145.12.peg.4113"/>
<dbReference type="EchoBASE" id="EB1860"/>
<dbReference type="eggNOG" id="COG3068">
    <property type="taxonomic scope" value="Bacteria"/>
</dbReference>
<dbReference type="HOGENOM" id="CLU_096082_0_0_6"/>
<dbReference type="InParanoid" id="P32680"/>
<dbReference type="OMA" id="FYGVYPA"/>
<dbReference type="OrthoDB" id="9204516at2"/>
<dbReference type="PhylomeDB" id="P32680"/>
<dbReference type="BioCyc" id="EcoCyc:EG11916-MONOMER"/>
<dbReference type="PRO" id="PR:P32680"/>
<dbReference type="Proteomes" id="UP000000625">
    <property type="component" value="Chromosome"/>
</dbReference>
<dbReference type="GO" id="GO:0005829">
    <property type="term" value="C:cytosol"/>
    <property type="evidence" value="ECO:0000314"/>
    <property type="project" value="EcoCyc"/>
</dbReference>
<dbReference type="FunFam" id="1.20.1590.10:FF:000001">
    <property type="entry name" value="DUF416 family protein"/>
    <property type="match status" value="1"/>
</dbReference>
<dbReference type="Gene3D" id="1.20.1590.10">
    <property type="entry name" value="YP_001051499.1 domain like"/>
    <property type="match status" value="1"/>
</dbReference>
<dbReference type="InterPro" id="IPR007338">
    <property type="entry name" value="DUF416"/>
</dbReference>
<dbReference type="InterPro" id="IPR023381">
    <property type="entry name" value="YP001051499.1-like_dom_sf"/>
</dbReference>
<dbReference type="Pfam" id="PF04222">
    <property type="entry name" value="DUF416"/>
    <property type="match status" value="1"/>
</dbReference>
<comment type="similarity">
    <text evidence="1">To H.influenzae HI_0431.</text>
</comment>
<organism>
    <name type="scientific">Escherichia coli (strain K12)</name>
    <dbReference type="NCBI Taxonomy" id="83333"/>
    <lineage>
        <taxon>Bacteria</taxon>
        <taxon>Pseudomonadati</taxon>
        <taxon>Pseudomonadota</taxon>
        <taxon>Gammaproteobacteria</taxon>
        <taxon>Enterobacterales</taxon>
        <taxon>Enterobacteriaceae</taxon>
        <taxon>Escherichia</taxon>
    </lineage>
</organism>
<name>YJAG_ECOLI</name>
<proteinExistence type="predicted"/>
<sequence>MLQNPIHLRLERLESWQHVTFMACLCERMYPNYAMFCQQTGFGDGQIYRRILDLIWETLTVKDAKVNFDSQLEKFEEAIPSADDFDLYGVYPAIDACVALSELVHSRLSGETLEHAVEVSKTSITTVAMLEMTQAGREMSDEELKENPAVEQEWDIQWEIFRLLAECEERDIELIKGLRADLREAGESNIGIIFQQ</sequence>
<accession>P32680</accession>
<accession>Q2M8T6</accession>
<keyword id="KW-1185">Reference proteome</keyword>
<evidence type="ECO:0000305" key="1"/>
<feature type="chain" id="PRO_0000169702" description="Uncharacterized protein YjaG">
    <location>
        <begin position="1"/>
        <end position="196"/>
    </location>
</feature>
<reference key="1">
    <citation type="journal article" date="1993" name="Nucleic Acids Res.">
        <title>Analysis of the Escherichia coli genome. IV. DNA sequence of the region from 89.2 to 92.8 minutes.</title>
        <authorList>
            <person name="Blattner F.R."/>
            <person name="Burland V.D."/>
            <person name="Plunkett G. III"/>
            <person name="Sofia H.J."/>
            <person name="Daniels D.L."/>
        </authorList>
    </citation>
    <scope>NUCLEOTIDE SEQUENCE [LARGE SCALE GENOMIC DNA]</scope>
    <source>
        <strain>K12 / MG1655 / ATCC 47076</strain>
    </source>
</reference>
<reference key="2">
    <citation type="journal article" date="1997" name="Science">
        <title>The complete genome sequence of Escherichia coli K-12.</title>
        <authorList>
            <person name="Blattner F.R."/>
            <person name="Plunkett G. III"/>
            <person name="Bloch C.A."/>
            <person name="Perna N.T."/>
            <person name="Burland V."/>
            <person name="Riley M."/>
            <person name="Collado-Vides J."/>
            <person name="Glasner J.D."/>
            <person name="Rode C.K."/>
            <person name="Mayhew G.F."/>
            <person name="Gregor J."/>
            <person name="Davis N.W."/>
            <person name="Kirkpatrick H.A."/>
            <person name="Goeden M.A."/>
            <person name="Rose D.J."/>
            <person name="Mau B."/>
            <person name="Shao Y."/>
        </authorList>
    </citation>
    <scope>NUCLEOTIDE SEQUENCE [LARGE SCALE GENOMIC DNA]</scope>
    <source>
        <strain>K12 / MG1655 / ATCC 47076</strain>
    </source>
</reference>
<reference key="3">
    <citation type="journal article" date="2006" name="Mol. Syst. Biol.">
        <title>Highly accurate genome sequences of Escherichia coli K-12 strains MG1655 and W3110.</title>
        <authorList>
            <person name="Hayashi K."/>
            <person name="Morooka N."/>
            <person name="Yamamoto Y."/>
            <person name="Fujita K."/>
            <person name="Isono K."/>
            <person name="Choi S."/>
            <person name="Ohtsubo E."/>
            <person name="Baba T."/>
            <person name="Wanner B.L."/>
            <person name="Mori H."/>
            <person name="Horiuchi T."/>
        </authorList>
    </citation>
    <scope>NUCLEOTIDE SEQUENCE [LARGE SCALE GENOMIC DNA]</scope>
    <source>
        <strain>K12 / W3110 / ATCC 27325 / DSM 5911</strain>
    </source>
</reference>
<gene>
    <name type="primary">yjaG</name>
    <name type="ordered locus">b3999</name>
    <name type="ordered locus">JW3963</name>
</gene>